<reference key="1">
    <citation type="journal article" date="2004" name="Nature">
        <title>Genome sequence of the Brown Norway rat yields insights into mammalian evolution.</title>
        <authorList>
            <person name="Gibbs R.A."/>
            <person name="Weinstock G.M."/>
            <person name="Metzker M.L."/>
            <person name="Muzny D.M."/>
            <person name="Sodergren E.J."/>
            <person name="Scherer S."/>
            <person name="Scott G."/>
            <person name="Steffen D."/>
            <person name="Worley K.C."/>
            <person name="Burch P.E."/>
            <person name="Okwuonu G."/>
            <person name="Hines S."/>
            <person name="Lewis L."/>
            <person name="Deramo C."/>
            <person name="Delgado O."/>
            <person name="Dugan-Rocha S."/>
            <person name="Miner G."/>
            <person name="Morgan M."/>
            <person name="Hawes A."/>
            <person name="Gill R."/>
            <person name="Holt R.A."/>
            <person name="Adams M.D."/>
            <person name="Amanatides P.G."/>
            <person name="Baden-Tillson H."/>
            <person name="Barnstead M."/>
            <person name="Chin S."/>
            <person name="Evans C.A."/>
            <person name="Ferriera S."/>
            <person name="Fosler C."/>
            <person name="Glodek A."/>
            <person name="Gu Z."/>
            <person name="Jennings D."/>
            <person name="Kraft C.L."/>
            <person name="Nguyen T."/>
            <person name="Pfannkoch C.M."/>
            <person name="Sitter C."/>
            <person name="Sutton G.G."/>
            <person name="Venter J.C."/>
            <person name="Woodage T."/>
            <person name="Smith D."/>
            <person name="Lee H.-M."/>
            <person name="Gustafson E."/>
            <person name="Cahill P."/>
            <person name="Kana A."/>
            <person name="Doucette-Stamm L."/>
            <person name="Weinstock K."/>
            <person name="Fechtel K."/>
            <person name="Weiss R.B."/>
            <person name="Dunn D.M."/>
            <person name="Green E.D."/>
            <person name="Blakesley R.W."/>
            <person name="Bouffard G.G."/>
            <person name="De Jong P.J."/>
            <person name="Osoegawa K."/>
            <person name="Zhu B."/>
            <person name="Marra M."/>
            <person name="Schein J."/>
            <person name="Bosdet I."/>
            <person name="Fjell C."/>
            <person name="Jones S."/>
            <person name="Krzywinski M."/>
            <person name="Mathewson C."/>
            <person name="Siddiqui A."/>
            <person name="Wye N."/>
            <person name="McPherson J."/>
            <person name="Zhao S."/>
            <person name="Fraser C.M."/>
            <person name="Shetty J."/>
            <person name="Shatsman S."/>
            <person name="Geer K."/>
            <person name="Chen Y."/>
            <person name="Abramzon S."/>
            <person name="Nierman W.C."/>
            <person name="Havlak P.H."/>
            <person name="Chen R."/>
            <person name="Durbin K.J."/>
            <person name="Egan A."/>
            <person name="Ren Y."/>
            <person name="Song X.-Z."/>
            <person name="Li B."/>
            <person name="Liu Y."/>
            <person name="Qin X."/>
            <person name="Cawley S."/>
            <person name="Cooney A.J."/>
            <person name="D'Souza L.M."/>
            <person name="Martin K."/>
            <person name="Wu J.Q."/>
            <person name="Gonzalez-Garay M.L."/>
            <person name="Jackson A.R."/>
            <person name="Kalafus K.J."/>
            <person name="McLeod M.P."/>
            <person name="Milosavljevic A."/>
            <person name="Virk D."/>
            <person name="Volkov A."/>
            <person name="Wheeler D.A."/>
            <person name="Zhang Z."/>
            <person name="Bailey J.A."/>
            <person name="Eichler E.E."/>
            <person name="Tuzun E."/>
            <person name="Birney E."/>
            <person name="Mongin E."/>
            <person name="Ureta-Vidal A."/>
            <person name="Woodwark C."/>
            <person name="Zdobnov E."/>
            <person name="Bork P."/>
            <person name="Suyama M."/>
            <person name="Torrents D."/>
            <person name="Alexandersson M."/>
            <person name="Trask B.J."/>
            <person name="Young J.M."/>
            <person name="Huang H."/>
            <person name="Wang H."/>
            <person name="Xing H."/>
            <person name="Daniels S."/>
            <person name="Gietzen D."/>
            <person name="Schmidt J."/>
            <person name="Stevens K."/>
            <person name="Vitt U."/>
            <person name="Wingrove J."/>
            <person name="Camara F."/>
            <person name="Mar Alba M."/>
            <person name="Abril J.F."/>
            <person name="Guigo R."/>
            <person name="Smit A."/>
            <person name="Dubchak I."/>
            <person name="Rubin E.M."/>
            <person name="Couronne O."/>
            <person name="Poliakov A."/>
            <person name="Huebner N."/>
            <person name="Ganten D."/>
            <person name="Goesele C."/>
            <person name="Hummel O."/>
            <person name="Kreitler T."/>
            <person name="Lee Y.-A."/>
            <person name="Monti J."/>
            <person name="Schulz H."/>
            <person name="Zimdahl H."/>
            <person name="Himmelbauer H."/>
            <person name="Lehrach H."/>
            <person name="Jacob H.J."/>
            <person name="Bromberg S."/>
            <person name="Gullings-Handley J."/>
            <person name="Jensen-Seaman M.I."/>
            <person name="Kwitek A.E."/>
            <person name="Lazar J."/>
            <person name="Pasko D."/>
            <person name="Tonellato P.J."/>
            <person name="Twigger S."/>
            <person name="Ponting C.P."/>
            <person name="Duarte J.M."/>
            <person name="Rice S."/>
            <person name="Goodstadt L."/>
            <person name="Beatson S.A."/>
            <person name="Emes R.D."/>
            <person name="Winter E.E."/>
            <person name="Webber C."/>
            <person name="Brandt P."/>
            <person name="Nyakatura G."/>
            <person name="Adetobi M."/>
            <person name="Chiaromonte F."/>
            <person name="Elnitski L."/>
            <person name="Eswara P."/>
            <person name="Hardison R.C."/>
            <person name="Hou M."/>
            <person name="Kolbe D."/>
            <person name="Makova K."/>
            <person name="Miller W."/>
            <person name="Nekrutenko A."/>
            <person name="Riemer C."/>
            <person name="Schwartz S."/>
            <person name="Taylor J."/>
            <person name="Yang S."/>
            <person name="Zhang Y."/>
            <person name="Lindpaintner K."/>
            <person name="Andrews T.D."/>
            <person name="Caccamo M."/>
            <person name="Clamp M."/>
            <person name="Clarke L."/>
            <person name="Curwen V."/>
            <person name="Durbin R.M."/>
            <person name="Eyras E."/>
            <person name="Searle S.M."/>
            <person name="Cooper G.M."/>
            <person name="Batzoglou S."/>
            <person name="Brudno M."/>
            <person name="Sidow A."/>
            <person name="Stone E.A."/>
            <person name="Payseur B.A."/>
            <person name="Bourque G."/>
            <person name="Lopez-Otin C."/>
            <person name="Puente X.S."/>
            <person name="Chakrabarti K."/>
            <person name="Chatterji S."/>
            <person name="Dewey C."/>
            <person name="Pachter L."/>
            <person name="Bray N."/>
            <person name="Yap V.B."/>
            <person name="Caspi A."/>
            <person name="Tesler G."/>
            <person name="Pevzner P.A."/>
            <person name="Haussler D."/>
            <person name="Roskin K.M."/>
            <person name="Baertsch R."/>
            <person name="Clawson H."/>
            <person name="Furey T.S."/>
            <person name="Hinrichs A.S."/>
            <person name="Karolchik D."/>
            <person name="Kent W.J."/>
            <person name="Rosenbloom K.R."/>
            <person name="Trumbower H."/>
            <person name="Weirauch M."/>
            <person name="Cooper D.N."/>
            <person name="Stenson P.D."/>
            <person name="Ma B."/>
            <person name="Brent M."/>
            <person name="Arumugam M."/>
            <person name="Shteynberg D."/>
            <person name="Copley R.R."/>
            <person name="Taylor M.S."/>
            <person name="Riethman H."/>
            <person name="Mudunuri U."/>
            <person name="Peterson J."/>
            <person name="Guyer M."/>
            <person name="Felsenfeld A."/>
            <person name="Old S."/>
            <person name="Mockrin S."/>
            <person name="Collins F.S."/>
        </authorList>
    </citation>
    <scope>NUCLEOTIDE SEQUENCE [LARGE SCALE GENOMIC DNA]</scope>
    <source>
        <strain>Brown Norway</strain>
    </source>
</reference>
<reference key="2">
    <citation type="submission" date="2005-07" db="EMBL/GenBank/DDBJ databases">
        <authorList>
            <person name="Mural R.J."/>
            <person name="Adams M.D."/>
            <person name="Myers E.W."/>
            <person name="Smith H.O."/>
            <person name="Venter J.C."/>
        </authorList>
    </citation>
    <scope>NUCLEOTIDE SEQUENCE [LARGE SCALE GENOMIC DNA]</scope>
    <source>
        <strain>Brown Norway</strain>
    </source>
</reference>
<reference key="3">
    <citation type="journal article" date="2004" name="Genome Res.">
        <title>The status, quality, and expansion of the NIH full-length cDNA project: the Mammalian Gene Collection (MGC).</title>
        <authorList>
            <consortium name="The MGC Project Team"/>
        </authorList>
    </citation>
    <scope>NUCLEOTIDE SEQUENCE [LARGE SCALE MRNA]</scope>
    <source>
        <tissue>Testis</tissue>
    </source>
</reference>
<reference key="4">
    <citation type="journal article" date="2008" name="Mol. Hum. Reprod.">
        <title>Characterization of an acrosome protein VAD1.2/AEP2 which is differentially expressed in spermatogenesis.</title>
        <authorList>
            <person name="Lee K.F."/>
            <person name="Tam Y.T."/>
            <person name="Zuo Y."/>
            <person name="Cheong A.W."/>
            <person name="Pang R.T."/>
            <person name="Lee N.P."/>
            <person name="Shum C.K."/>
            <person name="Tam P.C."/>
            <person name="Cheung A.N."/>
            <person name="Yang Z.M."/>
            <person name="Yeung W.S."/>
            <person name="Luk J.M."/>
        </authorList>
    </citation>
    <scope>TISSUE SPECIFICITY</scope>
    <scope>INTERACTION WITH SYNTAXIN-1 AND ACTB</scope>
</reference>
<reference key="5">
    <citation type="journal article" date="2012" name="Nat. Commun.">
        <title>Quantitative maps of protein phosphorylation sites across 14 different rat organs and tissues.</title>
        <authorList>
            <person name="Lundby A."/>
            <person name="Secher A."/>
            <person name="Lage K."/>
            <person name="Nordsborg N.B."/>
            <person name="Dmytriyev A."/>
            <person name="Lundby C."/>
            <person name="Olsen J.V."/>
        </authorList>
    </citation>
    <scope>PHOSPHORYLATION [LARGE SCALE ANALYSIS] AT SER-149; SER-152 AND THR-330</scope>
    <scope>IDENTIFICATION BY MASS SPECTROMETRY [LARGE SCALE ANALYSIS]</scope>
</reference>
<comment type="subunit">
    <text evidence="2">Interacts with syntaxin-1 and ACTB.</text>
</comment>
<comment type="tissue specificity">
    <text evidence="2">Abundantly expressed in testes. Expressed in germ cells, but not in Sertoli or Leydig cells of the adult testis. Localized at the acrosomal region of the round and elongated spermatids at stages VIII-X.</text>
</comment>
<organism>
    <name type="scientific">Rattus norvegicus</name>
    <name type="common">Rat</name>
    <dbReference type="NCBI Taxonomy" id="10116"/>
    <lineage>
        <taxon>Eukaryota</taxon>
        <taxon>Metazoa</taxon>
        <taxon>Chordata</taxon>
        <taxon>Craniata</taxon>
        <taxon>Vertebrata</taxon>
        <taxon>Euteleostomi</taxon>
        <taxon>Mammalia</taxon>
        <taxon>Eutheria</taxon>
        <taxon>Euarchontoglires</taxon>
        <taxon>Glires</taxon>
        <taxon>Rodentia</taxon>
        <taxon>Myomorpha</taxon>
        <taxon>Muroidea</taxon>
        <taxon>Muridae</taxon>
        <taxon>Murinae</taxon>
        <taxon>Rattus</taxon>
    </lineage>
</organism>
<name>SPT32_RAT</name>
<feature type="chain" id="PRO_0000420266" description="Spermatogenesis-associated protein 32">
    <location>
        <begin position="1"/>
        <end position="348"/>
    </location>
</feature>
<feature type="region of interest" description="Disordered" evidence="1">
    <location>
        <begin position="27"/>
        <end position="61"/>
    </location>
</feature>
<feature type="region of interest" description="Disordered" evidence="1">
    <location>
        <begin position="308"/>
        <end position="329"/>
    </location>
</feature>
<feature type="compositionally biased region" description="Basic and acidic residues" evidence="1">
    <location>
        <begin position="27"/>
        <end position="36"/>
    </location>
</feature>
<feature type="modified residue" description="Phosphoserine" evidence="3">
    <location>
        <position position="149"/>
    </location>
</feature>
<feature type="modified residue" description="Phosphoserine" evidence="3">
    <location>
        <position position="152"/>
    </location>
</feature>
<feature type="modified residue" description="Phosphothreonine" evidence="3">
    <location>
        <position position="330"/>
    </location>
</feature>
<sequence>MGVTGFSAFPCCGKNSVNIVERKNDDYHHHHHPLEDNKDEDNEMGTELSSMKPPPKVDPDPVPHLEDMVTELTSTPIPETENPEQQNYRIESIKPYEEELTTTNTFKPRGFNVNSTNKEEEEVVCGHFRSTPVQTSKHLFWSNKLIQASEHSLQTALEKHHKSPGEKKSISIAQVYTECTQRPSSTQVSRTPTPTALGLADLINFASSLAVASSSNMALPNLGTMIKGTSEKAQNTSLDFCQPIQSIKFTQATQITQISSEKQDEPPEVMAHKSWTQETRNVACSYLDINESGLKKATIQGEVKFVQAPATSPELQEDKDDSVPGTKKGTPILLKIHFKLSSPQAPEK</sequence>
<protein>
    <recommendedName>
        <fullName>Spermatogenesis-associated protein 32</fullName>
    </recommendedName>
    <alternativeName>
        <fullName>Acrosome expressed protein 2</fullName>
    </alternativeName>
</protein>
<accession>Q66H17</accession>
<evidence type="ECO:0000256" key="1">
    <source>
        <dbReference type="SAM" id="MobiDB-lite"/>
    </source>
</evidence>
<evidence type="ECO:0000269" key="2">
    <source>
    </source>
</evidence>
<evidence type="ECO:0007744" key="3">
    <source>
    </source>
</evidence>
<dbReference type="EMBL" id="AABR06065672">
    <property type="status" value="NOT_ANNOTATED_CDS"/>
    <property type="molecule type" value="Genomic_DNA"/>
</dbReference>
<dbReference type="EMBL" id="CH473948">
    <property type="protein sequence ID" value="EDM06261.1"/>
    <property type="molecule type" value="Genomic_DNA"/>
</dbReference>
<dbReference type="EMBL" id="BC082079">
    <property type="protein sequence ID" value="AAH82079.1"/>
    <property type="molecule type" value="mRNA"/>
</dbReference>
<dbReference type="RefSeq" id="NP_001005531.1">
    <property type="nucleotide sequence ID" value="NM_001005531.1"/>
</dbReference>
<dbReference type="FunCoup" id="Q66H17">
    <property type="interactions" value="2"/>
</dbReference>
<dbReference type="STRING" id="10116.ENSRNOP00000004371"/>
<dbReference type="iPTMnet" id="Q66H17"/>
<dbReference type="PhosphoSitePlus" id="Q66H17"/>
<dbReference type="PaxDb" id="10116-ENSRNOP00000004371"/>
<dbReference type="GeneID" id="287747"/>
<dbReference type="KEGG" id="rno:287747"/>
<dbReference type="UCSC" id="RGD:1359156">
    <property type="organism name" value="rat"/>
</dbReference>
<dbReference type="AGR" id="RGD:1359156"/>
<dbReference type="CTD" id="124783"/>
<dbReference type="RGD" id="1359156">
    <property type="gene designation" value="Spata32"/>
</dbReference>
<dbReference type="VEuPathDB" id="HostDB:ENSRNOG00000003275"/>
<dbReference type="eggNOG" id="ENOG502RU2T">
    <property type="taxonomic scope" value="Eukaryota"/>
</dbReference>
<dbReference type="HOGENOM" id="CLU_064427_0_0_1"/>
<dbReference type="InParanoid" id="Q66H17"/>
<dbReference type="OrthoDB" id="9625284at2759"/>
<dbReference type="PhylomeDB" id="Q66H17"/>
<dbReference type="TreeFam" id="TF338309"/>
<dbReference type="PRO" id="PR:Q66H17"/>
<dbReference type="Proteomes" id="UP000002494">
    <property type="component" value="Chromosome 10"/>
</dbReference>
<dbReference type="Proteomes" id="UP000234681">
    <property type="component" value="Chromosome 10"/>
</dbReference>
<dbReference type="Bgee" id="ENSRNOG00000003275">
    <property type="expression patterns" value="Expressed in testis and 2 other cell types or tissues"/>
</dbReference>
<dbReference type="GO" id="GO:0048471">
    <property type="term" value="C:perinuclear region of cytoplasm"/>
    <property type="evidence" value="ECO:0000314"/>
    <property type="project" value="RGD"/>
</dbReference>
<dbReference type="GO" id="GO:0003779">
    <property type="term" value="F:actin binding"/>
    <property type="evidence" value="ECO:0000353"/>
    <property type="project" value="RGD"/>
</dbReference>
<dbReference type="GO" id="GO:0007283">
    <property type="term" value="P:spermatogenesis"/>
    <property type="evidence" value="ECO:0000270"/>
    <property type="project" value="RGD"/>
</dbReference>
<dbReference type="InterPro" id="IPR029297">
    <property type="entry name" value="SPATA32"/>
</dbReference>
<dbReference type="PANTHER" id="PTHR37338">
    <property type="entry name" value="SPERMATOGENESIS-ASSOCIATED PROTEIN 32"/>
    <property type="match status" value="1"/>
</dbReference>
<dbReference type="PANTHER" id="PTHR37338:SF1">
    <property type="entry name" value="SPERMATOGENESIS-ASSOCIATED PROTEIN 32"/>
    <property type="match status" value="1"/>
</dbReference>
<dbReference type="Pfam" id="PF15310">
    <property type="entry name" value="VAD1-2"/>
    <property type="match status" value="1"/>
</dbReference>
<gene>
    <name type="primary">Spata32</name>
    <name type="synonym">Aep2</name>
    <name type="synonym">Vad1.2</name>
</gene>
<proteinExistence type="evidence at protein level"/>
<keyword id="KW-0597">Phosphoprotein</keyword>
<keyword id="KW-1185">Reference proteome</keyword>